<reference key="1">
    <citation type="book" date="2006" name="Gram positive pathogens, 2nd edition">
        <title>The Staphylococcus aureus NCTC 8325 genome.</title>
        <editorList>
            <person name="Fischetti V."/>
            <person name="Novick R."/>
            <person name="Ferretti J."/>
            <person name="Portnoy D."/>
            <person name="Rood J."/>
        </editorList>
        <authorList>
            <person name="Gillaspy A.F."/>
            <person name="Worrell V."/>
            <person name="Orvis J."/>
            <person name="Roe B.A."/>
            <person name="Dyer D.W."/>
            <person name="Iandolo J.J."/>
        </authorList>
    </citation>
    <scope>NUCLEOTIDE SEQUENCE [LARGE SCALE GENOMIC DNA]</scope>
    <source>
        <strain>NCTC 8325 / PS 47</strain>
    </source>
</reference>
<evidence type="ECO:0000255" key="1">
    <source>
        <dbReference type="HAMAP-Rule" id="MF_01395"/>
    </source>
</evidence>
<evidence type="ECO:0000255" key="2">
    <source>
        <dbReference type="PROSITE-ProRule" id="PRU01136"/>
    </source>
</evidence>
<evidence type="ECO:0007829" key="3">
    <source>
        <dbReference type="PDB" id="5KDR"/>
    </source>
</evidence>
<keyword id="KW-0002">3D-structure</keyword>
<keyword id="KW-0067">ATP-binding</keyword>
<keyword id="KW-0963">Cytoplasm</keyword>
<keyword id="KW-0275">Fatty acid biosynthesis</keyword>
<keyword id="KW-0276">Fatty acid metabolism</keyword>
<keyword id="KW-0444">Lipid biosynthesis</keyword>
<keyword id="KW-0443">Lipid metabolism</keyword>
<keyword id="KW-0479">Metal-binding</keyword>
<keyword id="KW-0547">Nucleotide-binding</keyword>
<keyword id="KW-1185">Reference proteome</keyword>
<keyword id="KW-0808">Transferase</keyword>
<keyword id="KW-0862">Zinc</keyword>
<keyword id="KW-0863">Zinc-finger</keyword>
<feature type="chain" id="PRO_0000389857" description="Acetyl-coenzyme A carboxylase carboxyl transferase subunit beta">
    <location>
        <begin position="1"/>
        <end position="285"/>
    </location>
</feature>
<feature type="domain" description="CoA carboxyltransferase N-terminal" evidence="2">
    <location>
        <begin position="29"/>
        <end position="285"/>
    </location>
</feature>
<feature type="zinc finger region" description="C4-type" evidence="1">
    <location>
        <begin position="33"/>
        <end position="55"/>
    </location>
</feature>
<feature type="binding site" evidence="1">
    <location>
        <position position="33"/>
    </location>
    <ligand>
        <name>Zn(2+)</name>
        <dbReference type="ChEBI" id="CHEBI:29105"/>
    </ligand>
</feature>
<feature type="binding site" evidence="1">
    <location>
        <position position="36"/>
    </location>
    <ligand>
        <name>Zn(2+)</name>
        <dbReference type="ChEBI" id="CHEBI:29105"/>
    </ligand>
</feature>
<feature type="binding site" evidence="1">
    <location>
        <position position="52"/>
    </location>
    <ligand>
        <name>Zn(2+)</name>
        <dbReference type="ChEBI" id="CHEBI:29105"/>
    </ligand>
</feature>
<feature type="binding site" evidence="1">
    <location>
        <position position="55"/>
    </location>
    <ligand>
        <name>Zn(2+)</name>
        <dbReference type="ChEBI" id="CHEBI:29105"/>
    </ligand>
</feature>
<feature type="strand" evidence="3">
    <location>
        <begin position="30"/>
        <end position="32"/>
    </location>
</feature>
<feature type="turn" evidence="3">
    <location>
        <begin position="34"/>
        <end position="36"/>
    </location>
</feature>
<feature type="strand" evidence="3">
    <location>
        <begin position="39"/>
        <end position="41"/>
    </location>
</feature>
<feature type="helix" evidence="3">
    <location>
        <begin position="42"/>
        <end position="47"/>
    </location>
</feature>
<feature type="turn" evidence="3">
    <location>
        <begin position="48"/>
        <end position="50"/>
    </location>
</feature>
<feature type="turn" evidence="3">
    <location>
        <begin position="53"/>
        <end position="55"/>
    </location>
</feature>
<feature type="helix" evidence="3">
    <location>
        <begin position="63"/>
        <end position="70"/>
    </location>
</feature>
<feature type="strand" evidence="3">
    <location>
        <begin position="77"/>
        <end position="80"/>
    </location>
</feature>
<feature type="helix" evidence="3">
    <location>
        <begin position="94"/>
        <end position="105"/>
    </location>
</feature>
<feature type="strand" evidence="3">
    <location>
        <begin position="108"/>
        <end position="118"/>
    </location>
</feature>
<feature type="strand" evidence="3">
    <location>
        <begin position="121"/>
        <end position="128"/>
    </location>
</feature>
<feature type="helix" evidence="3">
    <location>
        <begin position="132"/>
        <end position="135"/>
    </location>
</feature>
<feature type="helix" evidence="3">
    <location>
        <begin position="139"/>
        <end position="155"/>
    </location>
</feature>
<feature type="strand" evidence="3">
    <location>
        <begin position="159"/>
        <end position="168"/>
    </location>
</feature>
<feature type="helix" evidence="3">
    <location>
        <begin position="170"/>
        <end position="172"/>
    </location>
</feature>
<feature type="helix" evidence="3">
    <location>
        <begin position="173"/>
        <end position="192"/>
    </location>
</feature>
<feature type="strand" evidence="3">
    <location>
        <begin position="197"/>
        <end position="205"/>
    </location>
</feature>
<feature type="helix" evidence="3">
    <location>
        <begin position="207"/>
        <end position="210"/>
    </location>
</feature>
<feature type="helix" evidence="3">
    <location>
        <begin position="213"/>
        <end position="215"/>
    </location>
</feature>
<feature type="strand" evidence="3">
    <location>
        <begin position="218"/>
        <end position="222"/>
    </location>
</feature>
<feature type="helix" evidence="3">
    <location>
        <begin position="233"/>
        <end position="239"/>
    </location>
</feature>
<feature type="helix" evidence="3">
    <location>
        <begin position="251"/>
        <end position="256"/>
    </location>
</feature>
<feature type="strand" evidence="3">
    <location>
        <begin position="261"/>
        <end position="263"/>
    </location>
</feature>
<feature type="turn" evidence="3">
    <location>
        <begin position="266"/>
        <end position="268"/>
    </location>
</feature>
<feature type="helix" evidence="3">
    <location>
        <begin position="269"/>
        <end position="279"/>
    </location>
</feature>
<accession>Q2FXM6</accession>
<dbReference type="EC" id="2.1.3.15" evidence="1"/>
<dbReference type="EMBL" id="CP000253">
    <property type="protein sequence ID" value="ABD30877.1"/>
    <property type="molecule type" value="Genomic_DNA"/>
</dbReference>
<dbReference type="RefSeq" id="WP_000471571.1">
    <property type="nucleotide sequence ID" value="NZ_LS483365.1"/>
</dbReference>
<dbReference type="RefSeq" id="YP_500314.1">
    <property type="nucleotide sequence ID" value="NC_007795.1"/>
</dbReference>
<dbReference type="PDB" id="5KDR">
    <property type="method" value="X-ray"/>
    <property type="resolution" value="2.60 A"/>
    <property type="chains" value="B=1-285"/>
</dbReference>
<dbReference type="PDBsum" id="5KDR"/>
<dbReference type="SMR" id="Q2FXM6"/>
<dbReference type="STRING" id="93061.SAOUHSC_01809"/>
<dbReference type="PaxDb" id="1280-SAXN108_1729"/>
<dbReference type="GeneID" id="3919279"/>
<dbReference type="KEGG" id="sao:SAOUHSC_01809"/>
<dbReference type="PATRIC" id="fig|93061.5.peg.1649"/>
<dbReference type="eggNOG" id="COG0777">
    <property type="taxonomic scope" value="Bacteria"/>
</dbReference>
<dbReference type="HOGENOM" id="CLU_015486_1_0_9"/>
<dbReference type="OrthoDB" id="9772975at2"/>
<dbReference type="UniPathway" id="UPA00655">
    <property type="reaction ID" value="UER00711"/>
</dbReference>
<dbReference type="PRO" id="PR:Q2FXM6"/>
<dbReference type="Proteomes" id="UP000008816">
    <property type="component" value="Chromosome"/>
</dbReference>
<dbReference type="GO" id="GO:0009317">
    <property type="term" value="C:acetyl-CoA carboxylase complex"/>
    <property type="evidence" value="ECO:0007669"/>
    <property type="project" value="InterPro"/>
</dbReference>
<dbReference type="GO" id="GO:0003989">
    <property type="term" value="F:acetyl-CoA carboxylase activity"/>
    <property type="evidence" value="ECO:0007669"/>
    <property type="project" value="InterPro"/>
</dbReference>
<dbReference type="GO" id="GO:0005524">
    <property type="term" value="F:ATP binding"/>
    <property type="evidence" value="ECO:0007669"/>
    <property type="project" value="UniProtKB-KW"/>
</dbReference>
<dbReference type="GO" id="GO:0016743">
    <property type="term" value="F:carboxyl- or carbamoyltransferase activity"/>
    <property type="evidence" value="ECO:0007669"/>
    <property type="project" value="UniProtKB-UniRule"/>
</dbReference>
<dbReference type="GO" id="GO:0008270">
    <property type="term" value="F:zinc ion binding"/>
    <property type="evidence" value="ECO:0007669"/>
    <property type="project" value="UniProtKB-UniRule"/>
</dbReference>
<dbReference type="GO" id="GO:2001295">
    <property type="term" value="P:malonyl-CoA biosynthetic process"/>
    <property type="evidence" value="ECO:0007669"/>
    <property type="project" value="UniProtKB-UniRule"/>
</dbReference>
<dbReference type="GO" id="GO:0071768">
    <property type="term" value="P:mycolic acid biosynthetic process"/>
    <property type="evidence" value="ECO:0000318"/>
    <property type="project" value="GO_Central"/>
</dbReference>
<dbReference type="Gene3D" id="3.90.226.10">
    <property type="entry name" value="2-enoyl-CoA Hydratase, Chain A, domain 1"/>
    <property type="match status" value="1"/>
</dbReference>
<dbReference type="HAMAP" id="MF_01395">
    <property type="entry name" value="AcetylCoA_CT_beta"/>
    <property type="match status" value="1"/>
</dbReference>
<dbReference type="InterPro" id="IPR034733">
    <property type="entry name" value="AcCoA_carboxyl_beta"/>
</dbReference>
<dbReference type="InterPro" id="IPR000438">
    <property type="entry name" value="Acetyl_CoA_COase_Trfase_b_su"/>
</dbReference>
<dbReference type="InterPro" id="IPR029045">
    <property type="entry name" value="ClpP/crotonase-like_dom_sf"/>
</dbReference>
<dbReference type="InterPro" id="IPR011762">
    <property type="entry name" value="COA_CT_N"/>
</dbReference>
<dbReference type="InterPro" id="IPR041010">
    <property type="entry name" value="Znf-ACC"/>
</dbReference>
<dbReference type="NCBIfam" id="TIGR00515">
    <property type="entry name" value="accD"/>
    <property type="match status" value="1"/>
</dbReference>
<dbReference type="PANTHER" id="PTHR42995">
    <property type="entry name" value="ACETYL-COENZYME A CARBOXYLASE CARBOXYL TRANSFERASE SUBUNIT BETA, CHLOROPLASTIC"/>
    <property type="match status" value="1"/>
</dbReference>
<dbReference type="PANTHER" id="PTHR42995:SF5">
    <property type="entry name" value="ACETYL-COENZYME A CARBOXYLASE CARBOXYL TRANSFERASE SUBUNIT BETA, CHLOROPLASTIC"/>
    <property type="match status" value="1"/>
</dbReference>
<dbReference type="Pfam" id="PF01039">
    <property type="entry name" value="Carboxyl_trans"/>
    <property type="match status" value="1"/>
</dbReference>
<dbReference type="Pfam" id="PF17848">
    <property type="entry name" value="Zn_ribbon_ACC"/>
    <property type="match status" value="1"/>
</dbReference>
<dbReference type="PRINTS" id="PR01070">
    <property type="entry name" value="ACCCTRFRASEB"/>
</dbReference>
<dbReference type="SUPFAM" id="SSF52096">
    <property type="entry name" value="ClpP/crotonase"/>
    <property type="match status" value="1"/>
</dbReference>
<dbReference type="PROSITE" id="PS50980">
    <property type="entry name" value="COA_CT_NTER"/>
    <property type="match status" value="1"/>
</dbReference>
<name>ACCD_STAA8</name>
<proteinExistence type="evidence at protein level"/>
<comment type="function">
    <text evidence="1">Component of the acetyl coenzyme A carboxylase (ACC) complex. Biotin carboxylase (BC) catalyzes the carboxylation of biotin on its carrier protein (BCCP) and then the CO(2) group is transferred by the transcarboxylase to acetyl-CoA to form malonyl-CoA.</text>
</comment>
<comment type="catalytic activity">
    <reaction evidence="1">
        <text>N(6)-carboxybiotinyl-L-lysyl-[protein] + acetyl-CoA = N(6)-biotinyl-L-lysyl-[protein] + malonyl-CoA</text>
        <dbReference type="Rhea" id="RHEA:54728"/>
        <dbReference type="Rhea" id="RHEA-COMP:10505"/>
        <dbReference type="Rhea" id="RHEA-COMP:10506"/>
        <dbReference type="ChEBI" id="CHEBI:57288"/>
        <dbReference type="ChEBI" id="CHEBI:57384"/>
        <dbReference type="ChEBI" id="CHEBI:83144"/>
        <dbReference type="ChEBI" id="CHEBI:83145"/>
        <dbReference type="EC" id="2.1.3.15"/>
    </reaction>
</comment>
<comment type="cofactor">
    <cofactor evidence="1">
        <name>Zn(2+)</name>
        <dbReference type="ChEBI" id="CHEBI:29105"/>
    </cofactor>
    <text evidence="1">Binds 1 zinc ion per subunit.</text>
</comment>
<comment type="pathway">
    <text evidence="1">Lipid metabolism; malonyl-CoA biosynthesis; malonyl-CoA from acetyl-CoA: step 1/1.</text>
</comment>
<comment type="subunit">
    <text evidence="1">Acetyl-CoA carboxylase is a heterohexamer composed of biotin carboxyl carrier protein (AccB), biotin carboxylase (AccC) and two subunits each of ACCase subunit alpha (AccA) and ACCase subunit beta (AccD).</text>
</comment>
<comment type="subcellular location">
    <subcellularLocation>
        <location evidence="1">Cytoplasm</location>
    </subcellularLocation>
</comment>
<comment type="similarity">
    <text evidence="1">Belongs to the AccD/PCCB family.</text>
</comment>
<protein>
    <recommendedName>
        <fullName evidence="1">Acetyl-coenzyme A carboxylase carboxyl transferase subunit beta</fullName>
        <shortName evidence="1">ACCase subunit beta</shortName>
        <shortName evidence="1">Acetyl-CoA carboxylase carboxyltransferase subunit beta</shortName>
        <ecNumber evidence="1">2.1.3.15</ecNumber>
    </recommendedName>
</protein>
<organism>
    <name type="scientific">Staphylococcus aureus (strain NCTC 8325 / PS 47)</name>
    <dbReference type="NCBI Taxonomy" id="93061"/>
    <lineage>
        <taxon>Bacteria</taxon>
        <taxon>Bacillati</taxon>
        <taxon>Bacillota</taxon>
        <taxon>Bacilli</taxon>
        <taxon>Bacillales</taxon>
        <taxon>Staphylococcaceae</taxon>
        <taxon>Staphylococcus</taxon>
    </lineage>
</organism>
<sequence length="285" mass="31872">MFKDFFNRTKKKKYLTVQDSKNNDVPAGIMTKCPKCKKIMYTKELAENLNVCFNCDHHIALTAYKRIEAISDEGSFTEFDKGMTSANPLDFPSYLEKIEKDQQKTGLKEAVVTGTAQLDGMKFGVAVMDSRFRMGSMGSVIGEKICRIIDYCTENRLPFILFSASGGARMQEGIISLMQMGKTSVSLKRHSDAGLLYISYLTHPTTGGVSASFASVGDINLSEPKALIGFAGRRVIEQTINEKLPDDFQTAEFLLEHGQLDKVVHRNDMRQTLSEILKIHQEVTK</sequence>
<gene>
    <name evidence="1" type="primary">accD</name>
    <name type="ordered locus">SAOUHSC_01809</name>
</gene>